<gene>
    <name type="primary">RHO</name>
</gene>
<comment type="function">
    <text evidence="1 3">Photoreceptor required for image-forming vision at low light intensity. Required for photoreceptor cell viability after birth (By similarity). Light-induced isomerization of 11-cis to all-trans retinal triggers a conformational change that activates signaling via G-proteins. Subsequent receptor phosphorylation mediates displacement of the bound G-protein alpha subunit by the arrestin SAG and terminates signaling (By similarity).</text>
</comment>
<comment type="subunit">
    <text evidence="1 3">Homodimer (By similarity). May form a complex composed of RHO, GRK1 and RCVRN in a Ca(2+)-dependent manner; RCVRN prevents the interaction between GRK1 and RHO (By similarity). Interacts with GRK1 (By similarity). Interacts (phosphorylated form) with SAG. Interacts with GNAT1. Interacts with GNAT3. SAG and G-proteins compete for a common binding site (By similarity). Interacts with PRCD; the interaction promotes PRCD stability. Forms a complex with ASAP1 and ARF4. Forms a complex with ASAP1, RAB11A, Rabin8/RAB3IP, ARF4 and RAB11FIP3; the complex regulates Golgi-to-cilia rhodopsin/RHO transport in photoreceptors (By similarity).</text>
</comment>
<comment type="subcellular location">
    <subcellularLocation>
        <location evidence="1">Membrane</location>
        <topology evidence="1">Multi-pass membrane protein</topology>
    </subcellularLocation>
    <subcellularLocation>
        <location evidence="1">Cell projection</location>
        <location evidence="1">Cilium</location>
        <location evidence="1">Photoreceptor outer segment</location>
    </subcellularLocation>
    <text evidence="3">Synthesized in the inner segment (IS) of rod photoreceptor cells before vectorial transport to disk membranes in the rod outer segment (OS) photosensory cilia.</text>
</comment>
<comment type="PTM">
    <text evidence="1">Phosphorylated on some or all of the serine and threonine residues present in the C-terminal region.</text>
</comment>
<comment type="PTM">
    <text evidence="1">Contains one covalently linked retinal chromophore. Upon light absorption, the covalently bound 11-cis-retinal is converted to all-trans-retinal. After hydrolysis of the Schiff base and release of the covalently bound all-trans-retinal, active rhodopsin is regenerated by binding of a fresh molecule of 11-cis-retinal.</text>
</comment>
<comment type="similarity">
    <text evidence="5">Belongs to the G-protein coupled receptor 1 family. Opsin subfamily.</text>
</comment>
<evidence type="ECO:0000250" key="1">
    <source>
        <dbReference type="UniProtKB" id="P02699"/>
    </source>
</evidence>
<evidence type="ECO:0000250" key="2">
    <source>
        <dbReference type="UniProtKB" id="P02700"/>
    </source>
</evidence>
<evidence type="ECO:0000250" key="3">
    <source>
        <dbReference type="UniProtKB" id="P08100"/>
    </source>
</evidence>
<evidence type="ECO:0000255" key="4"/>
<evidence type="ECO:0000255" key="5">
    <source>
        <dbReference type="PROSITE-ProRule" id="PRU00521"/>
    </source>
</evidence>
<evidence type="ECO:0000305" key="6"/>
<organism>
    <name type="scientific">Oryctolagus cuniculus</name>
    <name type="common">Rabbit</name>
    <dbReference type="NCBI Taxonomy" id="9986"/>
    <lineage>
        <taxon>Eukaryota</taxon>
        <taxon>Metazoa</taxon>
        <taxon>Chordata</taxon>
        <taxon>Craniata</taxon>
        <taxon>Vertebrata</taxon>
        <taxon>Euteleostomi</taxon>
        <taxon>Mammalia</taxon>
        <taxon>Eutheria</taxon>
        <taxon>Euarchontoglires</taxon>
        <taxon>Glires</taxon>
        <taxon>Lagomorpha</taxon>
        <taxon>Leporidae</taxon>
        <taxon>Oryctolagus</taxon>
    </lineage>
</organism>
<dbReference type="EMBL" id="U21688">
    <property type="protein sequence ID" value="AAA91640.1"/>
    <property type="molecule type" value="mRNA"/>
</dbReference>
<dbReference type="PIR" id="JC4267">
    <property type="entry name" value="JC4267"/>
</dbReference>
<dbReference type="RefSeq" id="NP_001075818.1">
    <property type="nucleotide sequence ID" value="NM_001082349.1"/>
</dbReference>
<dbReference type="EMDB" id="EMD-25994"/>
<dbReference type="EMDB" id="EMD-26133"/>
<dbReference type="SMR" id="P49912"/>
<dbReference type="FunCoup" id="P49912">
    <property type="interactions" value="31"/>
</dbReference>
<dbReference type="STRING" id="9986.ENSOCUP00000011220"/>
<dbReference type="GlyCosmos" id="P49912">
    <property type="glycosylation" value="2 sites, No reported glycans"/>
</dbReference>
<dbReference type="PaxDb" id="9986-ENSOCUP00000011220"/>
<dbReference type="GeneID" id="100009200"/>
<dbReference type="KEGG" id="ocu:100009200"/>
<dbReference type="CTD" id="6010"/>
<dbReference type="eggNOG" id="KOG3656">
    <property type="taxonomic scope" value="Eukaryota"/>
</dbReference>
<dbReference type="HOGENOM" id="CLU_009579_3_0_1"/>
<dbReference type="InParanoid" id="P49912"/>
<dbReference type="OMA" id="VICGFTT"/>
<dbReference type="OrthoDB" id="5962323at2759"/>
<dbReference type="TreeFam" id="TF324998"/>
<dbReference type="Proteomes" id="UP000001811">
    <property type="component" value="Unplaced"/>
</dbReference>
<dbReference type="GO" id="GO:0016020">
    <property type="term" value="C:membrane"/>
    <property type="evidence" value="ECO:0000250"/>
    <property type="project" value="UniProtKB"/>
</dbReference>
<dbReference type="GO" id="GO:0097381">
    <property type="term" value="C:photoreceptor disc membrane"/>
    <property type="evidence" value="ECO:0000250"/>
    <property type="project" value="UniProtKB"/>
</dbReference>
<dbReference type="GO" id="GO:0060342">
    <property type="term" value="C:photoreceptor inner segment membrane"/>
    <property type="evidence" value="ECO:0000250"/>
    <property type="project" value="UniProtKB"/>
</dbReference>
<dbReference type="GO" id="GO:0042622">
    <property type="term" value="C:photoreceptor outer segment membrane"/>
    <property type="evidence" value="ECO:0000250"/>
    <property type="project" value="UniProtKB"/>
</dbReference>
<dbReference type="GO" id="GO:0005886">
    <property type="term" value="C:plasma membrane"/>
    <property type="evidence" value="ECO:0000250"/>
    <property type="project" value="UniProtKB"/>
</dbReference>
<dbReference type="GO" id="GO:0005502">
    <property type="term" value="F:11-cis retinal binding"/>
    <property type="evidence" value="ECO:0000250"/>
    <property type="project" value="UniProtKB"/>
</dbReference>
<dbReference type="GO" id="GO:0008020">
    <property type="term" value="F:G protein-coupled photoreceptor activity"/>
    <property type="evidence" value="ECO:0000250"/>
    <property type="project" value="UniProtKB"/>
</dbReference>
<dbReference type="GO" id="GO:0046872">
    <property type="term" value="F:metal ion binding"/>
    <property type="evidence" value="ECO:0007669"/>
    <property type="project" value="UniProtKB-KW"/>
</dbReference>
<dbReference type="GO" id="GO:0016038">
    <property type="term" value="P:absorption of visible light"/>
    <property type="evidence" value="ECO:0000250"/>
    <property type="project" value="AgBase"/>
</dbReference>
<dbReference type="GO" id="GO:0016056">
    <property type="term" value="P:G protein-coupled opsin signaling pathway"/>
    <property type="evidence" value="ECO:0000250"/>
    <property type="project" value="UniProtKB"/>
</dbReference>
<dbReference type="GO" id="GO:0007601">
    <property type="term" value="P:visual perception"/>
    <property type="evidence" value="ECO:0007669"/>
    <property type="project" value="UniProtKB-KW"/>
</dbReference>
<dbReference type="CDD" id="cd15080">
    <property type="entry name" value="7tmA_MWS_opsin"/>
    <property type="match status" value="1"/>
</dbReference>
<dbReference type="FunFam" id="1.20.1070.10:FF:000018">
    <property type="entry name" value="Rhodopsin"/>
    <property type="match status" value="1"/>
</dbReference>
<dbReference type="Gene3D" id="1.20.1070.10">
    <property type="entry name" value="Rhodopsin 7-helix transmembrane proteins"/>
    <property type="match status" value="1"/>
</dbReference>
<dbReference type="InterPro" id="IPR050125">
    <property type="entry name" value="GPCR_opsins"/>
</dbReference>
<dbReference type="InterPro" id="IPR000276">
    <property type="entry name" value="GPCR_Rhodpsn"/>
</dbReference>
<dbReference type="InterPro" id="IPR017452">
    <property type="entry name" value="GPCR_Rhodpsn_7TM"/>
</dbReference>
<dbReference type="InterPro" id="IPR001760">
    <property type="entry name" value="Opsin"/>
</dbReference>
<dbReference type="InterPro" id="IPR027430">
    <property type="entry name" value="Retinal_BS"/>
</dbReference>
<dbReference type="InterPro" id="IPR000732">
    <property type="entry name" value="Rhodopsin"/>
</dbReference>
<dbReference type="InterPro" id="IPR019477">
    <property type="entry name" value="Rhodopsin_N"/>
</dbReference>
<dbReference type="PANTHER" id="PTHR24240">
    <property type="entry name" value="OPSIN"/>
    <property type="match status" value="1"/>
</dbReference>
<dbReference type="Pfam" id="PF00001">
    <property type="entry name" value="7tm_1"/>
    <property type="match status" value="1"/>
</dbReference>
<dbReference type="Pfam" id="PF10413">
    <property type="entry name" value="Rhodopsin_N"/>
    <property type="match status" value="1"/>
</dbReference>
<dbReference type="PRINTS" id="PR00237">
    <property type="entry name" value="GPCRRHODOPSN"/>
</dbReference>
<dbReference type="PRINTS" id="PR00238">
    <property type="entry name" value="OPSIN"/>
</dbReference>
<dbReference type="PRINTS" id="PR00579">
    <property type="entry name" value="RHODOPSIN"/>
</dbReference>
<dbReference type="SUPFAM" id="SSF81321">
    <property type="entry name" value="Family A G protein-coupled receptor-like"/>
    <property type="match status" value="1"/>
</dbReference>
<dbReference type="PROSITE" id="PS00237">
    <property type="entry name" value="G_PROTEIN_RECEP_F1_1"/>
    <property type="match status" value="1"/>
</dbReference>
<dbReference type="PROSITE" id="PS50262">
    <property type="entry name" value="G_PROTEIN_RECEP_F1_2"/>
    <property type="match status" value="1"/>
</dbReference>
<dbReference type="PROSITE" id="PS00238">
    <property type="entry name" value="OPSIN"/>
    <property type="match status" value="1"/>
</dbReference>
<name>OPSD_RABIT</name>
<reference key="1">
    <citation type="journal article" date="1995" name="Gene">
        <title>The deduced amino-acid sequence of opsin from rabbit rod photoreceptors.</title>
        <authorList>
            <person name="Smith W.C."/>
            <person name="Martinko J.M."/>
            <person name="Wheeler J.N."/>
            <person name="Hargrave P.A."/>
            <person name="McDowell J.H."/>
        </authorList>
    </citation>
    <scope>NUCLEOTIDE SEQUENCE [MRNA]</scope>
    <source>
        <strain>New Zealand white</strain>
        <tissue>Retina</tissue>
    </source>
</reference>
<accession>P49912</accession>
<proteinExistence type="evidence at transcript level"/>
<keyword id="KW-0007">Acetylation</keyword>
<keyword id="KW-0966">Cell projection</keyword>
<keyword id="KW-0157">Chromophore</keyword>
<keyword id="KW-1015">Disulfide bond</keyword>
<keyword id="KW-0297">G-protein coupled receptor</keyword>
<keyword id="KW-0325">Glycoprotein</keyword>
<keyword id="KW-0449">Lipoprotein</keyword>
<keyword id="KW-0472">Membrane</keyword>
<keyword id="KW-0479">Metal-binding</keyword>
<keyword id="KW-0564">Palmitate</keyword>
<keyword id="KW-0597">Phosphoprotein</keyword>
<keyword id="KW-0600">Photoreceptor protein</keyword>
<keyword id="KW-0675">Receptor</keyword>
<keyword id="KW-1185">Reference proteome</keyword>
<keyword id="KW-0681">Retinal protein</keyword>
<keyword id="KW-0716">Sensory transduction</keyword>
<keyword id="KW-0807">Transducer</keyword>
<keyword id="KW-0812">Transmembrane</keyword>
<keyword id="KW-1133">Transmembrane helix</keyword>
<keyword id="KW-0844">Vision</keyword>
<keyword id="KW-0862">Zinc</keyword>
<sequence length="348" mass="38995">MNGTEGPDFYIPMSNQTGVVRSPFEYPQYYLAEPWQFSMLAAYMFLLIVLGFPINFLTLYVTVQHKKLRTPLNYILLNLAVADLFMVLGGFTTTLYTSLHGYFVFGPTGCNVEGFFATLGGEIALWSLVVLAIERYVVVCKPMSNFRFGENHAIMGVAFTWIMALACAAPPLVGWSRYIPEGMQCSCGIDYYTLKPEVNNESFVIYMFVVHFTIPLIIIFFCYGQLVFTVKEAAAQQQESATTQKAEKEVTRMVIIMVIAFLICWVPYASVAFYIFTHQGSNFGPIFMTIPAFFAKSSSIYNPVIYIMMNKQFRNCMLTTICCGKNPLGDDEASATASKTETSQVAPA</sequence>
<protein>
    <recommendedName>
        <fullName>Rhodopsin</fullName>
    </recommendedName>
</protein>
<feature type="chain" id="PRO_0000197704" description="Rhodopsin">
    <location>
        <begin position="1"/>
        <end position="348"/>
    </location>
</feature>
<feature type="topological domain" description="Extracellular" evidence="6">
    <location>
        <begin position="1"/>
        <end position="36"/>
    </location>
</feature>
<feature type="transmembrane region" description="Helical; Name=1" evidence="1">
    <location>
        <begin position="37"/>
        <end position="61"/>
    </location>
</feature>
<feature type="topological domain" description="Cytoplasmic" evidence="6">
    <location>
        <begin position="62"/>
        <end position="73"/>
    </location>
</feature>
<feature type="transmembrane region" description="Helical; Name=2" evidence="1">
    <location>
        <begin position="74"/>
        <end position="96"/>
    </location>
</feature>
<feature type="topological domain" description="Extracellular" evidence="6">
    <location>
        <begin position="97"/>
        <end position="110"/>
    </location>
</feature>
<feature type="transmembrane region" description="Helical; Name=3" evidence="1">
    <location>
        <begin position="111"/>
        <end position="133"/>
    </location>
</feature>
<feature type="topological domain" description="Cytoplasmic" evidence="6">
    <location>
        <begin position="134"/>
        <end position="152"/>
    </location>
</feature>
<feature type="transmembrane region" description="Helical; Name=4" evidence="1">
    <location>
        <begin position="153"/>
        <end position="173"/>
    </location>
</feature>
<feature type="topological domain" description="Extracellular" evidence="6">
    <location>
        <begin position="174"/>
        <end position="202"/>
    </location>
</feature>
<feature type="transmembrane region" description="Helical; Name=5" evidence="1">
    <location>
        <begin position="203"/>
        <end position="224"/>
    </location>
</feature>
<feature type="topological domain" description="Cytoplasmic" evidence="6">
    <location>
        <begin position="225"/>
        <end position="252"/>
    </location>
</feature>
<feature type="transmembrane region" description="Helical; Name=6" evidence="1">
    <location>
        <begin position="253"/>
        <end position="274"/>
    </location>
</feature>
<feature type="topological domain" description="Extracellular" evidence="6">
    <location>
        <begin position="275"/>
        <end position="286"/>
    </location>
</feature>
<feature type="transmembrane region" description="Helical; Name=7" evidence="1">
    <location>
        <begin position="287"/>
        <end position="308"/>
    </location>
</feature>
<feature type="topological domain" description="Cytoplasmic" evidence="6">
    <location>
        <begin position="309"/>
        <end position="348"/>
    </location>
</feature>
<feature type="region of interest" description="Interaction with SAG" evidence="1">
    <location>
        <begin position="330"/>
        <end position="348"/>
    </location>
</feature>
<feature type="short sequence motif" description="'Ionic lock' involved in activated form stabilization" evidence="1">
    <location>
        <begin position="134"/>
        <end position="136"/>
    </location>
</feature>
<feature type="binding site" evidence="1">
    <location>
        <position position="201"/>
    </location>
    <ligand>
        <name>Zn(2+)</name>
        <dbReference type="ChEBI" id="CHEBI:29105"/>
    </ligand>
</feature>
<feature type="binding site" evidence="1">
    <location>
        <position position="279"/>
    </location>
    <ligand>
        <name>Zn(2+)</name>
        <dbReference type="ChEBI" id="CHEBI:29105"/>
    </ligand>
</feature>
<feature type="site" description="Plays an important role in the conformation switch to the active conformation" evidence="1">
    <location>
        <position position="113"/>
    </location>
</feature>
<feature type="modified residue" description="N-acetylmethionine" evidence="1">
    <location>
        <position position="1"/>
    </location>
</feature>
<feature type="modified residue" description="N6-(retinylidene)lysine" evidence="1">
    <location>
        <position position="296"/>
    </location>
</feature>
<feature type="modified residue" description="Phosphoserine" evidence="2">
    <location>
        <position position="334"/>
    </location>
</feature>
<feature type="modified residue" description="Phosphothreonine" evidence="2">
    <location>
        <position position="336"/>
    </location>
</feature>
<feature type="modified residue" description="Phosphoserine" evidence="2">
    <location>
        <position position="338"/>
    </location>
</feature>
<feature type="modified residue" description="Phosphothreonine" evidence="1">
    <location>
        <position position="340"/>
    </location>
</feature>
<feature type="modified residue" description="Phosphothreonine" evidence="1">
    <location>
        <position position="342"/>
    </location>
</feature>
<feature type="modified residue" description="Phosphoserine" evidence="1">
    <location>
        <position position="343"/>
    </location>
</feature>
<feature type="lipid moiety-binding region" description="S-palmitoyl cysteine" evidence="1">
    <location>
        <position position="322"/>
    </location>
</feature>
<feature type="lipid moiety-binding region" description="S-palmitoyl cysteine" evidence="1">
    <location>
        <position position="323"/>
    </location>
</feature>
<feature type="glycosylation site" description="N-linked (GlcNAc...) asparagine" evidence="4">
    <location>
        <position position="2"/>
    </location>
</feature>
<feature type="glycosylation site" description="N-linked (GlcNAc...) asparagine" evidence="4">
    <location>
        <position position="15"/>
    </location>
</feature>
<feature type="disulfide bond" evidence="5">
    <location>
        <begin position="110"/>
        <end position="187"/>
    </location>
</feature>